<gene>
    <name type="primary">cooS</name>
    <name type="ordered locus">MJ0728</name>
</gene>
<feature type="chain" id="PRO_0000157143" description="Carbon monoxide dehydrogenase">
    <location>
        <begin position="1"/>
        <end position="624"/>
    </location>
</feature>
<feature type="binding site" evidence="1">
    <location>
        <position position="37"/>
    </location>
    <ligand>
        <name>[4Fe-4S] cluster</name>
        <dbReference type="ChEBI" id="CHEBI:49883"/>
        <label>1</label>
        <note>ligand shared between dimeric partners</note>
    </ligand>
</feature>
<feature type="binding site" evidence="1">
    <location>
        <position position="46"/>
    </location>
    <ligand>
        <name>[4Fe-4S] cluster</name>
        <dbReference type="ChEBI" id="CHEBI:49883"/>
        <label>2</label>
    </ligand>
</feature>
<feature type="binding site" evidence="1">
    <location>
        <position position="49"/>
    </location>
    <ligand>
        <name>[4Fe-4S] cluster</name>
        <dbReference type="ChEBI" id="CHEBI:49883"/>
        <label>2</label>
    </ligand>
</feature>
<feature type="binding site" evidence="1">
    <location>
        <position position="54"/>
    </location>
    <ligand>
        <name>[4Fe-4S] cluster</name>
        <dbReference type="ChEBI" id="CHEBI:49883"/>
        <label>2</label>
    </ligand>
</feature>
<feature type="binding site" evidence="1">
    <location>
        <position position="65"/>
    </location>
    <ligand>
        <name>[4Fe-4S] cluster</name>
        <dbReference type="ChEBI" id="CHEBI:49883"/>
        <label>2</label>
    </ligand>
</feature>
<feature type="binding site" evidence="1">
    <location>
        <position position="256"/>
    </location>
    <ligand>
        <name>[Ni-4Fe-5S] cluster</name>
        <dbReference type="ChEBI" id="CHEBI:177874"/>
    </ligand>
</feature>
<feature type="binding site" evidence="1">
    <location>
        <position position="292"/>
    </location>
    <ligand>
        <name>[Ni-4Fe-5S] cluster</name>
        <dbReference type="ChEBI" id="CHEBI:177874"/>
    </ligand>
</feature>
<feature type="binding site" evidence="1">
    <location>
        <position position="336"/>
    </location>
    <ligand>
        <name>[Ni-4Fe-5S] cluster</name>
        <dbReference type="ChEBI" id="CHEBI:177874"/>
    </ligand>
</feature>
<feature type="binding site" evidence="1">
    <location>
        <position position="444"/>
    </location>
    <ligand>
        <name>[Ni-4Fe-5S] cluster</name>
        <dbReference type="ChEBI" id="CHEBI:177874"/>
    </ligand>
</feature>
<feature type="binding site" evidence="1">
    <location>
        <position position="475"/>
    </location>
    <ligand>
        <name>[Ni-4Fe-5S] cluster</name>
        <dbReference type="ChEBI" id="CHEBI:177874"/>
    </ligand>
</feature>
<feature type="binding site" evidence="1">
    <location>
        <position position="516"/>
    </location>
    <ligand>
        <name>[Ni-4Fe-5S] cluster</name>
        <dbReference type="ChEBI" id="CHEBI:177874"/>
    </ligand>
</feature>
<protein>
    <recommendedName>
        <fullName>Carbon monoxide dehydrogenase</fullName>
        <shortName>CODH</shortName>
        <ecNumber evidence="1">1.2.7.4</ecNumber>
    </recommendedName>
</protein>
<comment type="function">
    <text evidence="1">CODH oxidizes carbon monoxide coupled, via CooF, to the reduction of a hydrogen cation by a hydrogenase (possibly CooH).</text>
</comment>
<comment type="catalytic activity">
    <reaction evidence="1">
        <text>CO + 2 oxidized [2Fe-2S]-[ferredoxin] + H2O = 2 reduced [2Fe-2S]-[ferredoxin] + CO2 + 2 H(+)</text>
        <dbReference type="Rhea" id="RHEA:21040"/>
        <dbReference type="Rhea" id="RHEA-COMP:10000"/>
        <dbReference type="Rhea" id="RHEA-COMP:10001"/>
        <dbReference type="ChEBI" id="CHEBI:15377"/>
        <dbReference type="ChEBI" id="CHEBI:15378"/>
        <dbReference type="ChEBI" id="CHEBI:16526"/>
        <dbReference type="ChEBI" id="CHEBI:17245"/>
        <dbReference type="ChEBI" id="CHEBI:33737"/>
        <dbReference type="ChEBI" id="CHEBI:33738"/>
        <dbReference type="EC" id="1.2.7.4"/>
    </reaction>
</comment>
<comment type="cofactor">
    <cofactor evidence="1">
        <name>[4Fe-4S] cluster</name>
        <dbReference type="ChEBI" id="CHEBI:49883"/>
    </cofactor>
    <text evidence="1">Binds 3 [4Fe-4S] clusters per homodimer.</text>
</comment>
<comment type="cofactor">
    <cofactor evidence="1">
        <name>[Ni-4Fe-5S] cluster</name>
        <dbReference type="ChEBI" id="CHEBI:177874"/>
    </cofactor>
    <text evidence="1">Binds 2 [Ni-4Fe-5S] clusters per homodimer.</text>
</comment>
<comment type="subunit">
    <text evidence="1">Homodimer.</text>
</comment>
<comment type="domain">
    <text evidence="1">Cluster B is an all-cysteinyl-liganded 4Fe-4S cluster; cluster C is a mixed Ni-Fe-S cluster is to be the active site of CO oxidation. Cluster D is also an all-cysteinyl-liganded 4Fe-4S cluster that bridges the two subunits of the CODH dimer.</text>
</comment>
<comment type="similarity">
    <text evidence="2">Belongs to the Ni-containing carbon monoxide dehydrogenase family.</text>
</comment>
<comment type="caution">
    <text evidence="2">This protein lacks the conserved Cys in position 45; it is replaced by a Tyr. It is therefore possible that the D-cluster is either altered or missing in this protein, which may not form homodimers.</text>
</comment>
<sequence length="624" mass="67408">MKNCIAAIPEVKEMVEKAKLKGIETPHTRFPNQFPKCPYGLKGVYCILCANGPCRITEKTPYGVCGATADVIVARNLCRAVAAGTSCYVHCAENAARALLSAGKGEGSYEIRNEKKLKFLAKKLGFDANKDAKQLAVEVAEFILDDMYKPRWEKSELVPKLCPEKRLEVFEKLDILPGGAKGEIVDALTKTSTNLNSNPMDLLVHCLRLGLHAGFTGLLMTCWLNDILFGSPKITVVENGFSSVKPNNVNIMITGHQHALIQPLCEAAMEEDLIKMAKEAGADEIKIIGATCNGQDMETRIAHLPESFVGYIANNFTTEPLVATGLIDAVVSEFNCTFHGLKFVAEKTKTKLICIDDMAYVEGAEYIPWEPENAKEKAREIIKKAIEAFKERKGMQKDYYDEKVKSVVGVGEESLVEFLGGSVKPLIELIASGKIKGVVGVVGCSNLASGGHDNIIVTLTKELIKRDILVLAGGCVNSPLKHAGLFDPASAELAGENLKEVCKSLGIPPVLNFGACLSIARIEQVAVAIAEELGVDIPDLPVAASAPQWLEEQALADATYAVDMGFTVHVSPVPFVTGSELVTKVLTEAVEGLTGGKLIPEPNPYKAADLLEQTIMEKRKKLGI</sequence>
<keyword id="KW-0004">4Fe-4S</keyword>
<keyword id="KW-0408">Iron</keyword>
<keyword id="KW-0411">Iron-sulfur</keyword>
<keyword id="KW-0479">Metal-binding</keyword>
<keyword id="KW-0533">Nickel</keyword>
<keyword id="KW-0560">Oxidoreductase</keyword>
<keyword id="KW-1185">Reference proteome</keyword>
<name>COOS_METJA</name>
<dbReference type="EC" id="1.2.7.4" evidence="1"/>
<dbReference type="EMBL" id="L77117">
    <property type="protein sequence ID" value="AAB98724.1"/>
    <property type="molecule type" value="Genomic_DNA"/>
</dbReference>
<dbReference type="PIR" id="H64390">
    <property type="entry name" value="H64390"/>
</dbReference>
<dbReference type="RefSeq" id="WP_010870233.1">
    <property type="nucleotide sequence ID" value="NC_000909.1"/>
</dbReference>
<dbReference type="SMR" id="Q58138"/>
<dbReference type="FunCoup" id="Q58138">
    <property type="interactions" value="90"/>
</dbReference>
<dbReference type="STRING" id="243232.MJ_0728"/>
<dbReference type="PaxDb" id="243232-MJ_0728"/>
<dbReference type="EnsemblBacteria" id="AAB98724">
    <property type="protein sequence ID" value="AAB98724"/>
    <property type="gene ID" value="MJ_0728"/>
</dbReference>
<dbReference type="GeneID" id="1451605"/>
<dbReference type="KEGG" id="mja:MJ_0728"/>
<dbReference type="eggNOG" id="arCOG02429">
    <property type="taxonomic scope" value="Archaea"/>
</dbReference>
<dbReference type="HOGENOM" id="CLU_030631_0_0_2"/>
<dbReference type="InParanoid" id="Q58138"/>
<dbReference type="OrthoDB" id="146433at2157"/>
<dbReference type="PhylomeDB" id="Q58138"/>
<dbReference type="Proteomes" id="UP000000805">
    <property type="component" value="Chromosome"/>
</dbReference>
<dbReference type="GO" id="GO:0051539">
    <property type="term" value="F:4 iron, 4 sulfur cluster binding"/>
    <property type="evidence" value="ECO:0007669"/>
    <property type="project" value="UniProtKB-KW"/>
</dbReference>
<dbReference type="GO" id="GO:0043885">
    <property type="term" value="F:anaerobic carbon-monoxide dehydrogenase activity"/>
    <property type="evidence" value="ECO:0007669"/>
    <property type="project" value="UniProtKB-EC"/>
</dbReference>
<dbReference type="GO" id="GO:0050418">
    <property type="term" value="F:hydroxylamine reductase activity"/>
    <property type="evidence" value="ECO:0000318"/>
    <property type="project" value="GO_Central"/>
</dbReference>
<dbReference type="GO" id="GO:0016151">
    <property type="term" value="F:nickel cation binding"/>
    <property type="evidence" value="ECO:0007669"/>
    <property type="project" value="InterPro"/>
</dbReference>
<dbReference type="GO" id="GO:0004601">
    <property type="term" value="F:peroxidase activity"/>
    <property type="evidence" value="ECO:0000318"/>
    <property type="project" value="GO_Central"/>
</dbReference>
<dbReference type="GO" id="GO:0006091">
    <property type="term" value="P:generation of precursor metabolites and energy"/>
    <property type="evidence" value="ECO:0007669"/>
    <property type="project" value="InterPro"/>
</dbReference>
<dbReference type="GO" id="GO:0046210">
    <property type="term" value="P:nitric oxide catabolic process"/>
    <property type="evidence" value="ECO:0000318"/>
    <property type="project" value="GO_Central"/>
</dbReference>
<dbReference type="GO" id="GO:0042542">
    <property type="term" value="P:response to hydrogen peroxide"/>
    <property type="evidence" value="ECO:0000318"/>
    <property type="project" value="GO_Central"/>
</dbReference>
<dbReference type="CDD" id="cd01915">
    <property type="entry name" value="CODH"/>
    <property type="match status" value="1"/>
</dbReference>
<dbReference type="FunFam" id="1.20.1270.30:FF:000001">
    <property type="entry name" value="Carbon monoxide dehydrogenase"/>
    <property type="match status" value="1"/>
</dbReference>
<dbReference type="FunFam" id="3.40.50.2030:FF:000003">
    <property type="entry name" value="Carbon monoxide dehydrogenase"/>
    <property type="match status" value="1"/>
</dbReference>
<dbReference type="FunFam" id="3.40.50.2030:FF:000005">
    <property type="entry name" value="Carbon monoxide dehydrogenase"/>
    <property type="match status" value="1"/>
</dbReference>
<dbReference type="Gene3D" id="1.20.1270.30">
    <property type="match status" value="1"/>
</dbReference>
<dbReference type="Gene3D" id="3.40.50.2030">
    <property type="match status" value="2"/>
</dbReference>
<dbReference type="InterPro" id="IPR016101">
    <property type="entry name" value="CO_DH_a-bundle"/>
</dbReference>
<dbReference type="InterPro" id="IPR010047">
    <property type="entry name" value="CODH"/>
</dbReference>
<dbReference type="InterPro" id="IPR004137">
    <property type="entry name" value="HCP/CODH"/>
</dbReference>
<dbReference type="InterPro" id="IPR016099">
    <property type="entry name" value="Prismane-like_a/b-sand"/>
</dbReference>
<dbReference type="InterPro" id="IPR011254">
    <property type="entry name" value="Prismane-like_sf"/>
</dbReference>
<dbReference type="NCBIfam" id="TIGR01702">
    <property type="entry name" value="CO_DH_cata"/>
    <property type="match status" value="1"/>
</dbReference>
<dbReference type="PANTHER" id="PTHR30109:SF4">
    <property type="entry name" value="CARBON MONOXIDE DEHYDROGENASE"/>
    <property type="match status" value="1"/>
</dbReference>
<dbReference type="PANTHER" id="PTHR30109">
    <property type="entry name" value="HYDROXYLAMINE REDUCTASE"/>
    <property type="match status" value="1"/>
</dbReference>
<dbReference type="Pfam" id="PF03063">
    <property type="entry name" value="Prismane"/>
    <property type="match status" value="1"/>
</dbReference>
<dbReference type="PIRSF" id="PIRSF005023">
    <property type="entry name" value="CODH"/>
    <property type="match status" value="1"/>
</dbReference>
<dbReference type="SUPFAM" id="SSF56821">
    <property type="entry name" value="Prismane protein-like"/>
    <property type="match status" value="1"/>
</dbReference>
<accession>Q58138</accession>
<proteinExistence type="inferred from homology"/>
<evidence type="ECO:0000250" key="1">
    <source>
        <dbReference type="UniProtKB" id="Q9F8A8"/>
    </source>
</evidence>
<evidence type="ECO:0000305" key="2"/>
<organism>
    <name type="scientific">Methanocaldococcus jannaschii (strain ATCC 43067 / DSM 2661 / JAL-1 / JCM 10045 / NBRC 100440)</name>
    <name type="common">Methanococcus jannaschii</name>
    <dbReference type="NCBI Taxonomy" id="243232"/>
    <lineage>
        <taxon>Archaea</taxon>
        <taxon>Methanobacteriati</taxon>
        <taxon>Methanobacteriota</taxon>
        <taxon>Methanomada group</taxon>
        <taxon>Methanococci</taxon>
        <taxon>Methanococcales</taxon>
        <taxon>Methanocaldococcaceae</taxon>
        <taxon>Methanocaldococcus</taxon>
    </lineage>
</organism>
<reference key="1">
    <citation type="journal article" date="1996" name="Science">
        <title>Complete genome sequence of the methanogenic archaeon, Methanococcus jannaschii.</title>
        <authorList>
            <person name="Bult C.J."/>
            <person name="White O."/>
            <person name="Olsen G.J."/>
            <person name="Zhou L."/>
            <person name="Fleischmann R.D."/>
            <person name="Sutton G.G."/>
            <person name="Blake J.A."/>
            <person name="FitzGerald L.M."/>
            <person name="Clayton R.A."/>
            <person name="Gocayne J.D."/>
            <person name="Kerlavage A.R."/>
            <person name="Dougherty B.A."/>
            <person name="Tomb J.-F."/>
            <person name="Adams M.D."/>
            <person name="Reich C.I."/>
            <person name="Overbeek R."/>
            <person name="Kirkness E.F."/>
            <person name="Weinstock K.G."/>
            <person name="Merrick J.M."/>
            <person name="Glodek A."/>
            <person name="Scott J.L."/>
            <person name="Geoghagen N.S.M."/>
            <person name="Weidman J.F."/>
            <person name="Fuhrmann J.L."/>
            <person name="Nguyen D."/>
            <person name="Utterback T.R."/>
            <person name="Kelley J.M."/>
            <person name="Peterson J.D."/>
            <person name="Sadow P.W."/>
            <person name="Hanna M.C."/>
            <person name="Cotton M.D."/>
            <person name="Roberts K.M."/>
            <person name="Hurst M.A."/>
            <person name="Kaine B.P."/>
            <person name="Borodovsky M."/>
            <person name="Klenk H.-P."/>
            <person name="Fraser C.M."/>
            <person name="Smith H.O."/>
            <person name="Woese C.R."/>
            <person name="Venter J.C."/>
        </authorList>
    </citation>
    <scope>NUCLEOTIDE SEQUENCE [LARGE SCALE GENOMIC DNA]</scope>
    <source>
        <strain>ATCC 43067 / DSM 2661 / JAL-1 / JCM 10045 / NBRC 100440</strain>
    </source>
</reference>
<reference key="2">
    <citation type="journal article" date="2002" name="Biochemistry">
        <title>The Ni-containing carbon monoxide dehydrogenase family: light at the end of the tunnel?</title>
        <authorList>
            <person name="Lindahl P.A."/>
        </authorList>
    </citation>
    <scope>REVIEW</scope>
</reference>